<dbReference type="EC" id="1.10.3.-"/>
<dbReference type="EMBL" id="M86548">
    <property type="protein sequence ID" value="AAA22689.1"/>
    <property type="molecule type" value="Genomic_DNA"/>
</dbReference>
<dbReference type="EMBL" id="X73124">
    <property type="protein sequence ID" value="CAA51596.1"/>
    <property type="molecule type" value="Genomic_DNA"/>
</dbReference>
<dbReference type="EMBL" id="AL009126">
    <property type="protein sequence ID" value="CAB15840.1"/>
    <property type="molecule type" value="Genomic_DNA"/>
</dbReference>
<dbReference type="PIR" id="D38129">
    <property type="entry name" value="D38129"/>
</dbReference>
<dbReference type="RefSeq" id="NP_391693.1">
    <property type="nucleotide sequence ID" value="NC_000964.3"/>
</dbReference>
<dbReference type="RefSeq" id="WP_003227410.1">
    <property type="nucleotide sequence ID" value="NZ_OZ025638.1"/>
</dbReference>
<dbReference type="PDB" id="6KOB">
    <property type="method" value="X-ray"/>
    <property type="resolution" value="3.60 A"/>
    <property type="chains" value="D/H=48-124"/>
</dbReference>
<dbReference type="PDB" id="6KOC">
    <property type="method" value="X-ray"/>
    <property type="resolution" value="3.80 A"/>
    <property type="chains" value="D/H=48-124"/>
</dbReference>
<dbReference type="PDB" id="6KOE">
    <property type="method" value="X-ray"/>
    <property type="resolution" value="3.75 A"/>
    <property type="chains" value="D/H=48-124"/>
</dbReference>
<dbReference type="PDBsum" id="6KOB"/>
<dbReference type="PDBsum" id="6KOC"/>
<dbReference type="PDBsum" id="6KOE"/>
<dbReference type="SMR" id="P34959"/>
<dbReference type="FunCoup" id="P34959">
    <property type="interactions" value="45"/>
</dbReference>
<dbReference type="STRING" id="224308.BSU38140"/>
<dbReference type="PaxDb" id="224308-BSU38140"/>
<dbReference type="EnsemblBacteria" id="CAB15840">
    <property type="protein sequence ID" value="CAB15840"/>
    <property type="gene ID" value="BSU_38140"/>
</dbReference>
<dbReference type="GeneID" id="937285"/>
<dbReference type="KEGG" id="bsu:BSU38140"/>
<dbReference type="PATRIC" id="fig|224308.179.peg.4128"/>
<dbReference type="eggNOG" id="COG3125">
    <property type="taxonomic scope" value="Bacteria"/>
</dbReference>
<dbReference type="InParanoid" id="P34959"/>
<dbReference type="OrthoDB" id="2361460at2"/>
<dbReference type="PhylomeDB" id="P34959"/>
<dbReference type="BioCyc" id="BSUB:BSU38140-MONOMER"/>
<dbReference type="BioCyc" id="MetaCyc:BSU38140-MONOMER"/>
<dbReference type="Proteomes" id="UP000001570">
    <property type="component" value="Chromosome"/>
</dbReference>
<dbReference type="GO" id="GO:0009319">
    <property type="term" value="C:cytochrome o ubiquinol oxidase complex"/>
    <property type="evidence" value="ECO:0000318"/>
    <property type="project" value="GO_Central"/>
</dbReference>
<dbReference type="GO" id="GO:0005886">
    <property type="term" value="C:plasma membrane"/>
    <property type="evidence" value="ECO:0000318"/>
    <property type="project" value="GO_Central"/>
</dbReference>
<dbReference type="GO" id="GO:0009486">
    <property type="term" value="F:cytochrome bo3 ubiquinol oxidase activity"/>
    <property type="evidence" value="ECO:0000318"/>
    <property type="project" value="GO_Central"/>
</dbReference>
<dbReference type="GO" id="GO:0016682">
    <property type="term" value="F:oxidoreductase activity, acting on diphenols and related substances as donors, oxygen as acceptor"/>
    <property type="evidence" value="ECO:0000250"/>
    <property type="project" value="UniProtKB"/>
</dbReference>
<dbReference type="GO" id="GO:0015078">
    <property type="term" value="F:proton transmembrane transporter activity"/>
    <property type="evidence" value="ECO:0000318"/>
    <property type="project" value="GO_Central"/>
</dbReference>
<dbReference type="GO" id="GO:0019646">
    <property type="term" value="P:aerobic electron transport chain"/>
    <property type="evidence" value="ECO:0000318"/>
    <property type="project" value="GO_Central"/>
</dbReference>
<dbReference type="GO" id="GO:0042773">
    <property type="term" value="P:ATP synthesis coupled electron transport"/>
    <property type="evidence" value="ECO:0000250"/>
    <property type="project" value="UniProtKB"/>
</dbReference>
<dbReference type="GO" id="GO:0015990">
    <property type="term" value="P:electron transport coupled proton transport"/>
    <property type="evidence" value="ECO:0000318"/>
    <property type="project" value="GO_Central"/>
</dbReference>
<dbReference type="InterPro" id="IPR005171">
    <property type="entry name" value="Cyt_c_oxidase_su4_prok"/>
</dbReference>
<dbReference type="InterPro" id="IPR050968">
    <property type="entry name" value="Cytochrome_c_oxidase_bac_sub4"/>
</dbReference>
<dbReference type="InterPro" id="IPR014250">
    <property type="entry name" value="QoxD"/>
</dbReference>
<dbReference type="NCBIfam" id="TIGR02901">
    <property type="entry name" value="QoxD"/>
    <property type="match status" value="1"/>
</dbReference>
<dbReference type="PANTHER" id="PTHR36835">
    <property type="entry name" value="CYTOCHROME BO(3) UBIQUINOL OXIDASE SUBUNIT 4"/>
    <property type="match status" value="1"/>
</dbReference>
<dbReference type="PANTHER" id="PTHR36835:SF1">
    <property type="entry name" value="CYTOCHROME BO(3) UBIQUINOL OXIDASE SUBUNIT 4"/>
    <property type="match status" value="1"/>
</dbReference>
<dbReference type="Pfam" id="PF03626">
    <property type="entry name" value="COX4_pro"/>
    <property type="match status" value="1"/>
</dbReference>
<keyword id="KW-0002">3D-structure</keyword>
<keyword id="KW-1003">Cell membrane</keyword>
<keyword id="KW-0472">Membrane</keyword>
<keyword id="KW-0560">Oxidoreductase</keyword>
<keyword id="KW-1185">Reference proteome</keyword>
<keyword id="KW-0812">Transmembrane</keyword>
<keyword id="KW-1133">Transmembrane helix</keyword>
<name>QOX4_BACSU</name>
<sequence>MANKSAEHSHFPWKHIVGFILSIVLTLLALWVAVYTDLSSSAKLWIIFGFAFIQAALQLLMFMHMTESENGTIQVGNTLFGFFGAIVIVLGSIWIFAAHYHHGDHMDGNPPGGAEHSEHSGHNE</sequence>
<reference key="1">
    <citation type="journal article" date="1992" name="J. Biol. Chem.">
        <title>Molecular cloning, sequencing, and physiological characterization of the qox operon from Bacillus subtilis encoding the aa3-600 quinol oxidase.</title>
        <authorList>
            <person name="Santana M."/>
            <person name="Kunst F."/>
            <person name="Hullo M.-F."/>
            <person name="Rapoport G."/>
            <person name="Danchin A."/>
            <person name="Glaser P."/>
        </authorList>
    </citation>
    <scope>NUCLEOTIDE SEQUENCE [GENOMIC DNA]</scope>
    <source>
        <strain>168</strain>
    </source>
</reference>
<reference key="2">
    <citation type="journal article" date="1993" name="Mol. Microbiol.">
        <title>Bacillus subtilis genome project: cloning and sequencing of the 97 kb region from 325 degrees to 333 degrees.</title>
        <authorList>
            <person name="Glaser P."/>
            <person name="Kunst F."/>
            <person name="Arnaud M."/>
            <person name="Coudart M.P."/>
            <person name="Gonzales W."/>
            <person name="Hullo M.-F."/>
            <person name="Ionescu M."/>
            <person name="Lubochinsky B."/>
            <person name="Marcelino L."/>
            <person name="Moszer I."/>
            <person name="Presecan E."/>
            <person name="Santana M."/>
            <person name="Schneider E."/>
            <person name="Schweizer J."/>
            <person name="Vertes A."/>
            <person name="Rapoport G."/>
            <person name="Danchin A."/>
        </authorList>
    </citation>
    <scope>NUCLEOTIDE SEQUENCE [GENOMIC DNA]</scope>
    <source>
        <strain>168</strain>
    </source>
</reference>
<reference key="3">
    <citation type="journal article" date="1997" name="Nature">
        <title>The complete genome sequence of the Gram-positive bacterium Bacillus subtilis.</title>
        <authorList>
            <person name="Kunst F."/>
            <person name="Ogasawara N."/>
            <person name="Moszer I."/>
            <person name="Albertini A.M."/>
            <person name="Alloni G."/>
            <person name="Azevedo V."/>
            <person name="Bertero M.G."/>
            <person name="Bessieres P."/>
            <person name="Bolotin A."/>
            <person name="Borchert S."/>
            <person name="Borriss R."/>
            <person name="Boursier L."/>
            <person name="Brans A."/>
            <person name="Braun M."/>
            <person name="Brignell S.C."/>
            <person name="Bron S."/>
            <person name="Brouillet S."/>
            <person name="Bruschi C.V."/>
            <person name="Caldwell B."/>
            <person name="Capuano V."/>
            <person name="Carter N.M."/>
            <person name="Choi S.-K."/>
            <person name="Codani J.-J."/>
            <person name="Connerton I.F."/>
            <person name="Cummings N.J."/>
            <person name="Daniel R.A."/>
            <person name="Denizot F."/>
            <person name="Devine K.M."/>
            <person name="Duesterhoeft A."/>
            <person name="Ehrlich S.D."/>
            <person name="Emmerson P.T."/>
            <person name="Entian K.-D."/>
            <person name="Errington J."/>
            <person name="Fabret C."/>
            <person name="Ferrari E."/>
            <person name="Foulger D."/>
            <person name="Fritz C."/>
            <person name="Fujita M."/>
            <person name="Fujita Y."/>
            <person name="Fuma S."/>
            <person name="Galizzi A."/>
            <person name="Galleron N."/>
            <person name="Ghim S.-Y."/>
            <person name="Glaser P."/>
            <person name="Goffeau A."/>
            <person name="Golightly E.J."/>
            <person name="Grandi G."/>
            <person name="Guiseppi G."/>
            <person name="Guy B.J."/>
            <person name="Haga K."/>
            <person name="Haiech J."/>
            <person name="Harwood C.R."/>
            <person name="Henaut A."/>
            <person name="Hilbert H."/>
            <person name="Holsappel S."/>
            <person name="Hosono S."/>
            <person name="Hullo M.-F."/>
            <person name="Itaya M."/>
            <person name="Jones L.-M."/>
            <person name="Joris B."/>
            <person name="Karamata D."/>
            <person name="Kasahara Y."/>
            <person name="Klaerr-Blanchard M."/>
            <person name="Klein C."/>
            <person name="Kobayashi Y."/>
            <person name="Koetter P."/>
            <person name="Koningstein G."/>
            <person name="Krogh S."/>
            <person name="Kumano M."/>
            <person name="Kurita K."/>
            <person name="Lapidus A."/>
            <person name="Lardinois S."/>
            <person name="Lauber J."/>
            <person name="Lazarevic V."/>
            <person name="Lee S.-M."/>
            <person name="Levine A."/>
            <person name="Liu H."/>
            <person name="Masuda S."/>
            <person name="Mauel C."/>
            <person name="Medigue C."/>
            <person name="Medina N."/>
            <person name="Mellado R.P."/>
            <person name="Mizuno M."/>
            <person name="Moestl D."/>
            <person name="Nakai S."/>
            <person name="Noback M."/>
            <person name="Noone D."/>
            <person name="O'Reilly M."/>
            <person name="Ogawa K."/>
            <person name="Ogiwara A."/>
            <person name="Oudega B."/>
            <person name="Park S.-H."/>
            <person name="Parro V."/>
            <person name="Pohl T.M."/>
            <person name="Portetelle D."/>
            <person name="Porwollik S."/>
            <person name="Prescott A.M."/>
            <person name="Presecan E."/>
            <person name="Pujic P."/>
            <person name="Purnelle B."/>
            <person name="Rapoport G."/>
            <person name="Rey M."/>
            <person name="Reynolds S."/>
            <person name="Rieger M."/>
            <person name="Rivolta C."/>
            <person name="Rocha E."/>
            <person name="Roche B."/>
            <person name="Rose M."/>
            <person name="Sadaie Y."/>
            <person name="Sato T."/>
            <person name="Scanlan E."/>
            <person name="Schleich S."/>
            <person name="Schroeter R."/>
            <person name="Scoffone F."/>
            <person name="Sekiguchi J."/>
            <person name="Sekowska A."/>
            <person name="Seror S.J."/>
            <person name="Serror P."/>
            <person name="Shin B.-S."/>
            <person name="Soldo B."/>
            <person name="Sorokin A."/>
            <person name="Tacconi E."/>
            <person name="Takagi T."/>
            <person name="Takahashi H."/>
            <person name="Takemaru K."/>
            <person name="Takeuchi M."/>
            <person name="Tamakoshi A."/>
            <person name="Tanaka T."/>
            <person name="Terpstra P."/>
            <person name="Tognoni A."/>
            <person name="Tosato V."/>
            <person name="Uchiyama S."/>
            <person name="Vandenbol M."/>
            <person name="Vannier F."/>
            <person name="Vassarotti A."/>
            <person name="Viari A."/>
            <person name="Wambutt R."/>
            <person name="Wedler E."/>
            <person name="Wedler H."/>
            <person name="Weitzenegger T."/>
            <person name="Winters P."/>
            <person name="Wipat A."/>
            <person name="Yamamoto H."/>
            <person name="Yamane K."/>
            <person name="Yasumoto K."/>
            <person name="Yata K."/>
            <person name="Yoshida K."/>
            <person name="Yoshikawa H.-F."/>
            <person name="Zumstein E."/>
            <person name="Yoshikawa H."/>
            <person name="Danchin A."/>
        </authorList>
    </citation>
    <scope>NUCLEOTIDE SEQUENCE [LARGE SCALE GENOMIC DNA]</scope>
    <source>
        <strain>168</strain>
    </source>
</reference>
<feature type="initiator methionine" description="Removed" evidence="1">
    <location>
        <position position="1"/>
    </location>
</feature>
<feature type="chain" id="PRO_0000183903" description="Quinol oxidase subunit 4">
    <location>
        <begin position="2"/>
        <end position="124"/>
    </location>
</feature>
<feature type="transmembrane region" description="Helical" evidence="2">
    <location>
        <begin position="16"/>
        <end position="36"/>
    </location>
</feature>
<feature type="transmembrane region" description="Helical" evidence="2">
    <location>
        <begin position="44"/>
        <end position="64"/>
    </location>
</feature>
<feature type="transmembrane region" description="Helical" evidence="2">
    <location>
        <begin position="78"/>
        <end position="98"/>
    </location>
</feature>
<evidence type="ECO:0000250" key="1"/>
<evidence type="ECO:0000255" key="2"/>
<evidence type="ECO:0000305" key="3"/>
<protein>
    <recommendedName>
        <fullName>Quinol oxidase subunit 4</fullName>
        <ecNumber>1.10.3.-</ecNumber>
    </recommendedName>
    <alternativeName>
        <fullName>Quinol oxidase aa3-600, subunit QoxD</fullName>
    </alternativeName>
    <alternativeName>
        <fullName>Quinol oxidase polypeptide IV</fullName>
    </alternativeName>
</protein>
<organism>
    <name type="scientific">Bacillus subtilis (strain 168)</name>
    <dbReference type="NCBI Taxonomy" id="224308"/>
    <lineage>
        <taxon>Bacteria</taxon>
        <taxon>Bacillati</taxon>
        <taxon>Bacillota</taxon>
        <taxon>Bacilli</taxon>
        <taxon>Bacillales</taxon>
        <taxon>Bacillaceae</taxon>
        <taxon>Bacillus</taxon>
    </lineage>
</organism>
<gene>
    <name type="primary">qoxD</name>
    <name type="ordered locus">BSU38140</name>
    <name type="ORF">ipa-40d</name>
</gene>
<comment type="function">
    <text evidence="1">Catalyzes quinol oxidation with the concomitant reduction of oxygen to water. Major component for energy conversion during vegetative growth (By similarity).</text>
</comment>
<comment type="catalytic activity">
    <reaction>
        <text>2 a quinol + O2 = 2 a quinone + 2 H2O</text>
        <dbReference type="Rhea" id="RHEA:55376"/>
        <dbReference type="ChEBI" id="CHEBI:15377"/>
        <dbReference type="ChEBI" id="CHEBI:15379"/>
        <dbReference type="ChEBI" id="CHEBI:24646"/>
        <dbReference type="ChEBI" id="CHEBI:132124"/>
    </reaction>
</comment>
<comment type="subcellular location">
    <subcellularLocation>
        <location evidence="1">Cell membrane</location>
        <topology evidence="1">Multi-pass membrane protein</topology>
    </subcellularLocation>
</comment>
<comment type="similarity">
    <text evidence="3">Belongs to the cytochrome c oxidase bacterial subunit 4 family.</text>
</comment>
<accession>P34959</accession>
<proteinExistence type="evidence at protein level"/>